<protein>
    <recommendedName>
        <fullName>Immediate early response gene 5-like protein</fullName>
    </recommendedName>
</protein>
<feature type="chain" id="PRO_0000334660" description="Immediate early response gene 5-like protein">
    <location>
        <begin position="1"/>
        <end position="293"/>
    </location>
</feature>
<evidence type="ECO:0000305" key="1"/>
<gene>
    <name type="primary">ier5l</name>
</gene>
<accession>Q66IT9</accession>
<dbReference type="EMBL" id="BC081197">
    <property type="protein sequence ID" value="AAH81197.1"/>
    <property type="status" value="ALT_INIT"/>
    <property type="molecule type" value="mRNA"/>
</dbReference>
<dbReference type="EMBL" id="BC160776">
    <property type="protein sequence ID" value="AAI60776.1"/>
    <property type="status" value="ALT_INIT"/>
    <property type="molecule type" value="mRNA"/>
</dbReference>
<dbReference type="AGR" id="Xenbase:XB-GENE-974864"/>
<dbReference type="Xenbase" id="XB-GENE-974864">
    <property type="gene designation" value="ier5l.S"/>
</dbReference>
<dbReference type="Proteomes" id="UP000186698">
    <property type="component" value="Unplaced"/>
</dbReference>
<dbReference type="InterPro" id="IPR008653">
    <property type="entry name" value="IER"/>
</dbReference>
<dbReference type="PANTHER" id="PTHR15895">
    <property type="entry name" value="IMMEDIATE EARLY RESPONSE GENE"/>
    <property type="match status" value="1"/>
</dbReference>
<dbReference type="Pfam" id="PF05760">
    <property type="entry name" value="IER"/>
    <property type="match status" value="1"/>
</dbReference>
<reference key="1">
    <citation type="submission" date="2004-08" db="EMBL/GenBank/DDBJ databases">
        <authorList>
            <consortium name="NIH - Xenopus Gene Collection (XGC) project"/>
        </authorList>
    </citation>
    <scope>NUCLEOTIDE SEQUENCE [LARGE SCALE MRNA]</scope>
    <source>
        <tissue>Eye</tissue>
        <tissue>Oocyte</tissue>
    </source>
</reference>
<comment type="similarity">
    <text evidence="1">Belongs to the IER family.</text>
</comment>
<comment type="sequence caution" evidence="1">
    <conflict type="erroneous initiation">
        <sequence resource="EMBL-CDS" id="AAH81197"/>
    </conflict>
</comment>
<comment type="sequence caution" evidence="1">
    <conflict type="erroneous initiation">
        <sequence resource="EMBL-CDS" id="AAI60776"/>
    </conflict>
</comment>
<organism>
    <name type="scientific">Xenopus laevis</name>
    <name type="common">African clawed frog</name>
    <dbReference type="NCBI Taxonomy" id="8355"/>
    <lineage>
        <taxon>Eukaryota</taxon>
        <taxon>Metazoa</taxon>
        <taxon>Chordata</taxon>
        <taxon>Craniata</taxon>
        <taxon>Vertebrata</taxon>
        <taxon>Euteleostomi</taxon>
        <taxon>Amphibia</taxon>
        <taxon>Batrachia</taxon>
        <taxon>Anura</taxon>
        <taxon>Pipoidea</taxon>
        <taxon>Pipidae</taxon>
        <taxon>Xenopodinae</taxon>
        <taxon>Xenopus</taxon>
        <taxon>Xenopus</taxon>
    </lineage>
</organism>
<keyword id="KW-1185">Reference proteome</keyword>
<name>IER5L_XENLA</name>
<proteinExistence type="evidence at transcript level"/>
<sequence>MEGALDAQSLISLSLRKIHNSRTQRGGIKLHKNLLVSYVLRNARQLYLSERYAELYRRQPFPQTMDECDEPDIPELSPLQIPEEGEDEMHQLPRIHSGGAELLEPLSSEETLELPPCAHSPHPAKEPQSHAAFYSPVPSRGFCSSGESAGPPQCSHTTVLDLDTHVVTTVESGYLHQDCPCQGAPLLSKRKYAPAGYGSYSGHGGPGEDLGDTAEPSFVPCKRGRYEDFCPQPLGEPADSNNNNISNLISIFGSGFSGLMSRQTEAEQTLNGHLCGKHALGSLGAWTRAIVAF</sequence>